<dbReference type="EC" id="3.6.5.3" evidence="2"/>
<dbReference type="EMBL" id="CP000492">
    <property type="protein sequence ID" value="ABL66413.1"/>
    <property type="molecule type" value="Genomic_DNA"/>
</dbReference>
<dbReference type="RefSeq" id="WP_011746195.1">
    <property type="nucleotide sequence ID" value="NC_008639.1"/>
</dbReference>
<dbReference type="SMR" id="A1BJ36"/>
<dbReference type="STRING" id="290317.Cpha266_2425"/>
<dbReference type="KEGG" id="cph:Cpha266_2425"/>
<dbReference type="eggNOG" id="COG0050">
    <property type="taxonomic scope" value="Bacteria"/>
</dbReference>
<dbReference type="HOGENOM" id="CLU_007265_0_0_10"/>
<dbReference type="OrthoDB" id="9804504at2"/>
<dbReference type="Proteomes" id="UP000008701">
    <property type="component" value="Chromosome"/>
</dbReference>
<dbReference type="GO" id="GO:0005829">
    <property type="term" value="C:cytosol"/>
    <property type="evidence" value="ECO:0007669"/>
    <property type="project" value="TreeGrafter"/>
</dbReference>
<dbReference type="GO" id="GO:0005525">
    <property type="term" value="F:GTP binding"/>
    <property type="evidence" value="ECO:0007669"/>
    <property type="project" value="UniProtKB-UniRule"/>
</dbReference>
<dbReference type="GO" id="GO:0003924">
    <property type="term" value="F:GTPase activity"/>
    <property type="evidence" value="ECO:0007669"/>
    <property type="project" value="InterPro"/>
</dbReference>
<dbReference type="GO" id="GO:0003746">
    <property type="term" value="F:translation elongation factor activity"/>
    <property type="evidence" value="ECO:0007669"/>
    <property type="project" value="UniProtKB-UniRule"/>
</dbReference>
<dbReference type="CDD" id="cd01884">
    <property type="entry name" value="EF_Tu"/>
    <property type="match status" value="1"/>
</dbReference>
<dbReference type="CDD" id="cd03697">
    <property type="entry name" value="EFTU_II"/>
    <property type="match status" value="1"/>
</dbReference>
<dbReference type="CDD" id="cd03707">
    <property type="entry name" value="EFTU_III"/>
    <property type="match status" value="1"/>
</dbReference>
<dbReference type="FunFam" id="2.40.30.10:FF:000001">
    <property type="entry name" value="Elongation factor Tu"/>
    <property type="match status" value="1"/>
</dbReference>
<dbReference type="FunFam" id="3.40.50.300:FF:000003">
    <property type="entry name" value="Elongation factor Tu"/>
    <property type="match status" value="1"/>
</dbReference>
<dbReference type="Gene3D" id="3.40.50.300">
    <property type="entry name" value="P-loop containing nucleotide triphosphate hydrolases"/>
    <property type="match status" value="1"/>
</dbReference>
<dbReference type="Gene3D" id="2.40.30.10">
    <property type="entry name" value="Translation factors"/>
    <property type="match status" value="2"/>
</dbReference>
<dbReference type="HAMAP" id="MF_00118_B">
    <property type="entry name" value="EF_Tu_B"/>
    <property type="match status" value="1"/>
</dbReference>
<dbReference type="InterPro" id="IPR041709">
    <property type="entry name" value="EF-Tu_GTP-bd"/>
</dbReference>
<dbReference type="InterPro" id="IPR050055">
    <property type="entry name" value="EF-Tu_GTPase"/>
</dbReference>
<dbReference type="InterPro" id="IPR004161">
    <property type="entry name" value="EFTu-like_2"/>
</dbReference>
<dbReference type="InterPro" id="IPR033720">
    <property type="entry name" value="EFTU_2"/>
</dbReference>
<dbReference type="InterPro" id="IPR031157">
    <property type="entry name" value="G_TR_CS"/>
</dbReference>
<dbReference type="InterPro" id="IPR027417">
    <property type="entry name" value="P-loop_NTPase"/>
</dbReference>
<dbReference type="InterPro" id="IPR005225">
    <property type="entry name" value="Small_GTP-bd"/>
</dbReference>
<dbReference type="InterPro" id="IPR000795">
    <property type="entry name" value="T_Tr_GTP-bd_dom"/>
</dbReference>
<dbReference type="InterPro" id="IPR009000">
    <property type="entry name" value="Transl_B-barrel_sf"/>
</dbReference>
<dbReference type="InterPro" id="IPR009001">
    <property type="entry name" value="Transl_elong_EF1A/Init_IF2_C"/>
</dbReference>
<dbReference type="InterPro" id="IPR004541">
    <property type="entry name" value="Transl_elong_EFTu/EF1A_bac/org"/>
</dbReference>
<dbReference type="InterPro" id="IPR004160">
    <property type="entry name" value="Transl_elong_EFTu/EF1A_C"/>
</dbReference>
<dbReference type="NCBIfam" id="TIGR00485">
    <property type="entry name" value="EF-Tu"/>
    <property type="match status" value="1"/>
</dbReference>
<dbReference type="NCBIfam" id="NF000766">
    <property type="entry name" value="PRK00049.1"/>
    <property type="match status" value="1"/>
</dbReference>
<dbReference type="NCBIfam" id="NF009372">
    <property type="entry name" value="PRK12735.1"/>
    <property type="match status" value="1"/>
</dbReference>
<dbReference type="NCBIfam" id="NF009373">
    <property type="entry name" value="PRK12736.1"/>
    <property type="match status" value="1"/>
</dbReference>
<dbReference type="NCBIfam" id="TIGR00231">
    <property type="entry name" value="small_GTP"/>
    <property type="match status" value="1"/>
</dbReference>
<dbReference type="PANTHER" id="PTHR43721:SF22">
    <property type="entry name" value="ELONGATION FACTOR TU, MITOCHONDRIAL"/>
    <property type="match status" value="1"/>
</dbReference>
<dbReference type="PANTHER" id="PTHR43721">
    <property type="entry name" value="ELONGATION FACTOR TU-RELATED"/>
    <property type="match status" value="1"/>
</dbReference>
<dbReference type="Pfam" id="PF00009">
    <property type="entry name" value="GTP_EFTU"/>
    <property type="match status" value="1"/>
</dbReference>
<dbReference type="Pfam" id="PF03144">
    <property type="entry name" value="GTP_EFTU_D2"/>
    <property type="match status" value="1"/>
</dbReference>
<dbReference type="Pfam" id="PF03143">
    <property type="entry name" value="GTP_EFTU_D3"/>
    <property type="match status" value="1"/>
</dbReference>
<dbReference type="PRINTS" id="PR00315">
    <property type="entry name" value="ELONGATNFCT"/>
</dbReference>
<dbReference type="SUPFAM" id="SSF50465">
    <property type="entry name" value="EF-Tu/eEF-1alpha/eIF2-gamma C-terminal domain"/>
    <property type="match status" value="1"/>
</dbReference>
<dbReference type="SUPFAM" id="SSF52540">
    <property type="entry name" value="P-loop containing nucleoside triphosphate hydrolases"/>
    <property type="match status" value="1"/>
</dbReference>
<dbReference type="SUPFAM" id="SSF50447">
    <property type="entry name" value="Translation proteins"/>
    <property type="match status" value="1"/>
</dbReference>
<dbReference type="PROSITE" id="PS00301">
    <property type="entry name" value="G_TR_1"/>
    <property type="match status" value="1"/>
</dbReference>
<dbReference type="PROSITE" id="PS51722">
    <property type="entry name" value="G_TR_2"/>
    <property type="match status" value="1"/>
</dbReference>
<comment type="function">
    <text evidence="2">GTP hydrolase that promotes the GTP-dependent binding of aminoacyl-tRNA to the A-site of ribosomes during protein biosynthesis.</text>
</comment>
<comment type="catalytic activity">
    <reaction evidence="2">
        <text>GTP + H2O = GDP + phosphate + H(+)</text>
        <dbReference type="Rhea" id="RHEA:19669"/>
        <dbReference type="ChEBI" id="CHEBI:15377"/>
        <dbReference type="ChEBI" id="CHEBI:15378"/>
        <dbReference type="ChEBI" id="CHEBI:37565"/>
        <dbReference type="ChEBI" id="CHEBI:43474"/>
        <dbReference type="ChEBI" id="CHEBI:58189"/>
        <dbReference type="EC" id="3.6.5.3"/>
    </reaction>
    <physiologicalReaction direction="left-to-right" evidence="2">
        <dbReference type="Rhea" id="RHEA:19670"/>
    </physiologicalReaction>
</comment>
<comment type="subunit">
    <text evidence="2">Monomer.</text>
</comment>
<comment type="subcellular location">
    <subcellularLocation>
        <location evidence="2">Cytoplasm</location>
    </subcellularLocation>
</comment>
<comment type="similarity">
    <text evidence="2">Belongs to the TRAFAC class translation factor GTPase superfamily. Classic translation factor GTPase family. EF-Tu/EF-1A subfamily.</text>
</comment>
<evidence type="ECO:0000250" key="1"/>
<evidence type="ECO:0000255" key="2">
    <source>
        <dbReference type="HAMAP-Rule" id="MF_00118"/>
    </source>
</evidence>
<sequence>MAKESYKRDKPHVNIGTIGHVDHGKTTLTAAITSVLAKQGLAQQRDFGSIDKAPEERERGITISTAHVEYQTKKRHYAHIDCPGHADYIKNMITGAAQMDGAILVVAGTDGPMPQTREHILLARQVNVPALVVYLNKVDIADPELIELVELELRELLTEYNFPGDDIPIIKGSALKALDGDLEGEKSIMELMDAVDEFIPEPLRDIDKPFLMPVEDVFSISGRGTVGTGRIERGRIKINEEVEIVGIKPTRKSVVTGIEMFQKLLDEGQAGDNAGLLLRGVDKTELERGMVIAKPGTIKPHTKFKAEVYILRKEEGGRHTPFFNGYRPQFYFRTTDVTGSVTLPEGVEMVMPGDNLSVDVELIVPIAMDENLRFAIREGGRTVGAGSVTKIIE</sequence>
<feature type="chain" id="PRO_1000015636" description="Elongation factor Tu">
    <location>
        <begin position="1"/>
        <end position="393"/>
    </location>
</feature>
<feature type="domain" description="tr-type G">
    <location>
        <begin position="10"/>
        <end position="203"/>
    </location>
</feature>
<feature type="region of interest" description="G1" evidence="1">
    <location>
        <begin position="19"/>
        <end position="26"/>
    </location>
</feature>
<feature type="region of interest" description="G2" evidence="1">
    <location>
        <begin position="60"/>
        <end position="64"/>
    </location>
</feature>
<feature type="region of interest" description="G3" evidence="1">
    <location>
        <begin position="81"/>
        <end position="84"/>
    </location>
</feature>
<feature type="region of interest" description="G4" evidence="1">
    <location>
        <begin position="136"/>
        <end position="139"/>
    </location>
</feature>
<feature type="region of interest" description="G5" evidence="1">
    <location>
        <begin position="173"/>
        <end position="175"/>
    </location>
</feature>
<feature type="binding site" evidence="2">
    <location>
        <begin position="19"/>
        <end position="26"/>
    </location>
    <ligand>
        <name>GTP</name>
        <dbReference type="ChEBI" id="CHEBI:37565"/>
    </ligand>
</feature>
<feature type="binding site" evidence="2">
    <location>
        <position position="26"/>
    </location>
    <ligand>
        <name>Mg(2+)</name>
        <dbReference type="ChEBI" id="CHEBI:18420"/>
    </ligand>
</feature>
<feature type="binding site" evidence="2">
    <location>
        <begin position="81"/>
        <end position="85"/>
    </location>
    <ligand>
        <name>GTP</name>
        <dbReference type="ChEBI" id="CHEBI:37565"/>
    </ligand>
</feature>
<feature type="binding site" evidence="2">
    <location>
        <begin position="136"/>
        <end position="139"/>
    </location>
    <ligand>
        <name>GTP</name>
        <dbReference type="ChEBI" id="CHEBI:37565"/>
    </ligand>
</feature>
<organism>
    <name type="scientific">Chlorobium phaeobacteroides (strain DSM 266 / SMG 266 / 2430)</name>
    <dbReference type="NCBI Taxonomy" id="290317"/>
    <lineage>
        <taxon>Bacteria</taxon>
        <taxon>Pseudomonadati</taxon>
        <taxon>Chlorobiota</taxon>
        <taxon>Chlorobiia</taxon>
        <taxon>Chlorobiales</taxon>
        <taxon>Chlorobiaceae</taxon>
        <taxon>Chlorobium/Pelodictyon group</taxon>
        <taxon>Chlorobium</taxon>
    </lineage>
</organism>
<proteinExistence type="inferred from homology"/>
<keyword id="KW-0963">Cytoplasm</keyword>
<keyword id="KW-0251">Elongation factor</keyword>
<keyword id="KW-0342">GTP-binding</keyword>
<keyword id="KW-0378">Hydrolase</keyword>
<keyword id="KW-0460">Magnesium</keyword>
<keyword id="KW-0479">Metal-binding</keyword>
<keyword id="KW-0547">Nucleotide-binding</keyword>
<keyword id="KW-0648">Protein biosynthesis</keyword>
<keyword id="KW-1185">Reference proteome</keyword>
<reference key="1">
    <citation type="submission" date="2006-12" db="EMBL/GenBank/DDBJ databases">
        <title>Complete sequence of Chlorobium phaeobacteroides DSM 266.</title>
        <authorList>
            <consortium name="US DOE Joint Genome Institute"/>
            <person name="Copeland A."/>
            <person name="Lucas S."/>
            <person name="Lapidus A."/>
            <person name="Barry K."/>
            <person name="Detter J.C."/>
            <person name="Glavina del Rio T."/>
            <person name="Hammon N."/>
            <person name="Israni S."/>
            <person name="Pitluck S."/>
            <person name="Goltsman E."/>
            <person name="Schmutz J."/>
            <person name="Larimer F."/>
            <person name="Land M."/>
            <person name="Hauser L."/>
            <person name="Mikhailova N."/>
            <person name="Li T."/>
            <person name="Overmann J."/>
            <person name="Bryant D.A."/>
            <person name="Richardson P."/>
        </authorList>
    </citation>
    <scope>NUCLEOTIDE SEQUENCE [LARGE SCALE GENOMIC DNA]</scope>
    <source>
        <strain>DSM 266 / SMG 266 / 2430</strain>
    </source>
</reference>
<protein>
    <recommendedName>
        <fullName evidence="2">Elongation factor Tu</fullName>
        <shortName evidence="2">EF-Tu</shortName>
        <ecNumber evidence="2">3.6.5.3</ecNumber>
    </recommendedName>
</protein>
<accession>A1BJ36</accession>
<gene>
    <name evidence="2" type="primary">tuf</name>
    <name type="ordered locus">Cpha266_2425</name>
</gene>
<name>EFTU_CHLPD</name>